<dbReference type="EMBL" id="AL161502">
    <property type="protein sequence ID" value="CAB81032.1"/>
    <property type="molecule type" value="Genomic_DNA"/>
</dbReference>
<dbReference type="EMBL" id="CP002687">
    <property type="protein sequence ID" value="AEE82439.1"/>
    <property type="molecule type" value="Genomic_DNA"/>
</dbReference>
<dbReference type="EMBL" id="CP002687">
    <property type="protein sequence ID" value="ANM67311.1"/>
    <property type="molecule type" value="Genomic_DNA"/>
</dbReference>
<dbReference type="PIR" id="F85061">
    <property type="entry name" value="F85061"/>
</dbReference>
<dbReference type="RefSeq" id="NP_001319870.1">
    <property type="nucleotide sequence ID" value="NM_001340518.1"/>
</dbReference>
<dbReference type="RefSeq" id="NP_192399.1">
    <property type="nucleotide sequence ID" value="NM_116728.2"/>
</dbReference>
<dbReference type="FunCoup" id="Q9M0Y9">
    <property type="interactions" value="91"/>
</dbReference>
<dbReference type="PaxDb" id="3702-AT4G04900.1"/>
<dbReference type="EnsemblPlants" id="AT4G04900.1">
    <property type="protein sequence ID" value="AT4G04900.1"/>
    <property type="gene ID" value="AT4G04900"/>
</dbReference>
<dbReference type="EnsemblPlants" id="AT4G04900.2">
    <property type="protein sequence ID" value="AT4G04900.2"/>
    <property type="gene ID" value="AT4G04900"/>
</dbReference>
<dbReference type="GeneID" id="825829"/>
<dbReference type="Gramene" id="AT4G04900.1">
    <property type="protein sequence ID" value="AT4G04900.1"/>
    <property type="gene ID" value="AT4G04900"/>
</dbReference>
<dbReference type="Gramene" id="AT4G04900.2">
    <property type="protein sequence ID" value="AT4G04900.2"/>
    <property type="gene ID" value="AT4G04900"/>
</dbReference>
<dbReference type="KEGG" id="ath:AT4G04900"/>
<dbReference type="Araport" id="AT4G04900"/>
<dbReference type="TAIR" id="AT4G04900">
    <property type="gene designation" value="RIC10"/>
</dbReference>
<dbReference type="eggNOG" id="ENOG502S1IY">
    <property type="taxonomic scope" value="Eukaryota"/>
</dbReference>
<dbReference type="HOGENOM" id="CLU_076219_2_0_1"/>
<dbReference type="InParanoid" id="Q9M0Y9"/>
<dbReference type="OMA" id="IYKGFKC"/>
<dbReference type="OrthoDB" id="4206278at2759"/>
<dbReference type="PhylomeDB" id="Q9M0Y9"/>
<dbReference type="PRO" id="PR:Q9M0Y9"/>
<dbReference type="Proteomes" id="UP000006548">
    <property type="component" value="Chromosome 4"/>
</dbReference>
<dbReference type="ExpressionAtlas" id="Q9M0Y9">
    <property type="expression patterns" value="baseline and differential"/>
</dbReference>
<dbReference type="GO" id="GO:0005737">
    <property type="term" value="C:cytoplasm"/>
    <property type="evidence" value="ECO:0000314"/>
    <property type="project" value="TAIR"/>
</dbReference>
<dbReference type="GO" id="GO:0009860">
    <property type="term" value="P:pollen tube growth"/>
    <property type="evidence" value="ECO:0000315"/>
    <property type="project" value="TAIR"/>
</dbReference>
<dbReference type="CDD" id="cd00132">
    <property type="entry name" value="CRIB"/>
    <property type="match status" value="1"/>
</dbReference>
<dbReference type="Gene3D" id="3.90.810.10">
    <property type="entry name" value="CRIB domain"/>
    <property type="match status" value="1"/>
</dbReference>
<dbReference type="InterPro" id="IPR000095">
    <property type="entry name" value="CRIB_dom"/>
</dbReference>
<dbReference type="InterPro" id="IPR036936">
    <property type="entry name" value="CRIB_dom_sf"/>
</dbReference>
<dbReference type="PANTHER" id="PTHR46325:SF20">
    <property type="entry name" value="CRIB DOMAIN-CONTAINING PROTEIN RIC10"/>
    <property type="match status" value="1"/>
</dbReference>
<dbReference type="PANTHER" id="PTHR46325">
    <property type="entry name" value="CRIB DOMAIN-CONTAINING PROTEIN RIC8"/>
    <property type="match status" value="1"/>
</dbReference>
<dbReference type="Pfam" id="PF00786">
    <property type="entry name" value="PBD"/>
    <property type="match status" value="1"/>
</dbReference>
<dbReference type="SMART" id="SM00285">
    <property type="entry name" value="PBD"/>
    <property type="match status" value="1"/>
</dbReference>
<dbReference type="PROSITE" id="PS50108">
    <property type="entry name" value="CRIB"/>
    <property type="match status" value="1"/>
</dbReference>
<keyword id="KW-0963">Cytoplasm</keyword>
<keyword id="KW-0341">Growth regulation</keyword>
<keyword id="KW-1185">Reference proteome</keyword>
<comment type="function">
    <text evidence="3">Functions as a downstream effector of Rho-related GTP binding proteins of the 'Rho of Plants' (ROPs) family. Participates in the propagation of ROP GTPase signals in specific cellular responses. Is involved in pollen tube growth regulation.</text>
</comment>
<comment type="subcellular location">
    <subcellularLocation>
        <location evidence="3">Cytoplasm</location>
    </subcellularLocation>
</comment>
<comment type="tissue specificity">
    <text evidence="3">Expressed in roots, leaves, flowers and pollen.</text>
</comment>
<comment type="miscellaneous">
    <text evidence="4">Over-expression of RIC10 in tobacco germinating pollen increases pollen tube elongation.</text>
</comment>
<evidence type="ECO:0000255" key="1">
    <source>
        <dbReference type="PROSITE-ProRule" id="PRU00057"/>
    </source>
</evidence>
<evidence type="ECO:0000256" key="2">
    <source>
        <dbReference type="SAM" id="MobiDB-lite"/>
    </source>
</evidence>
<evidence type="ECO:0000269" key="3">
    <source>
    </source>
</evidence>
<evidence type="ECO:0000305" key="4">
    <source>
    </source>
</evidence>
<reference key="1">
    <citation type="journal article" date="1999" name="Nature">
        <title>Sequence and analysis of chromosome 4 of the plant Arabidopsis thaliana.</title>
        <authorList>
            <person name="Mayer K.F.X."/>
            <person name="Schueller C."/>
            <person name="Wambutt R."/>
            <person name="Murphy G."/>
            <person name="Volckaert G."/>
            <person name="Pohl T."/>
            <person name="Duesterhoeft A."/>
            <person name="Stiekema W."/>
            <person name="Entian K.-D."/>
            <person name="Terryn N."/>
            <person name="Harris B."/>
            <person name="Ansorge W."/>
            <person name="Brandt P."/>
            <person name="Grivell L.A."/>
            <person name="Rieger M."/>
            <person name="Weichselgartner M."/>
            <person name="de Simone V."/>
            <person name="Obermaier B."/>
            <person name="Mache R."/>
            <person name="Mueller M."/>
            <person name="Kreis M."/>
            <person name="Delseny M."/>
            <person name="Puigdomenech P."/>
            <person name="Watson M."/>
            <person name="Schmidtheini T."/>
            <person name="Reichert B."/>
            <person name="Portetelle D."/>
            <person name="Perez-Alonso M."/>
            <person name="Boutry M."/>
            <person name="Bancroft I."/>
            <person name="Vos P."/>
            <person name="Hoheisel J."/>
            <person name="Zimmermann W."/>
            <person name="Wedler H."/>
            <person name="Ridley P."/>
            <person name="Langham S.-A."/>
            <person name="McCullagh B."/>
            <person name="Bilham L."/>
            <person name="Robben J."/>
            <person name="van der Schueren J."/>
            <person name="Grymonprez B."/>
            <person name="Chuang Y.-J."/>
            <person name="Vandenbussche F."/>
            <person name="Braeken M."/>
            <person name="Weltjens I."/>
            <person name="Voet M."/>
            <person name="Bastiaens I."/>
            <person name="Aert R."/>
            <person name="Defoor E."/>
            <person name="Weitzenegger T."/>
            <person name="Bothe G."/>
            <person name="Ramsperger U."/>
            <person name="Hilbert H."/>
            <person name="Braun M."/>
            <person name="Holzer E."/>
            <person name="Brandt A."/>
            <person name="Peters S."/>
            <person name="van Staveren M."/>
            <person name="Dirkse W."/>
            <person name="Mooijman P."/>
            <person name="Klein Lankhorst R."/>
            <person name="Rose M."/>
            <person name="Hauf J."/>
            <person name="Koetter P."/>
            <person name="Berneiser S."/>
            <person name="Hempel S."/>
            <person name="Feldpausch M."/>
            <person name="Lamberth S."/>
            <person name="Van den Daele H."/>
            <person name="De Keyser A."/>
            <person name="Buysshaert C."/>
            <person name="Gielen J."/>
            <person name="Villarroel R."/>
            <person name="De Clercq R."/>
            <person name="van Montagu M."/>
            <person name="Rogers J."/>
            <person name="Cronin A."/>
            <person name="Quail M.A."/>
            <person name="Bray-Allen S."/>
            <person name="Clark L."/>
            <person name="Doggett J."/>
            <person name="Hall S."/>
            <person name="Kay M."/>
            <person name="Lennard N."/>
            <person name="McLay K."/>
            <person name="Mayes R."/>
            <person name="Pettett A."/>
            <person name="Rajandream M.A."/>
            <person name="Lyne M."/>
            <person name="Benes V."/>
            <person name="Rechmann S."/>
            <person name="Borkova D."/>
            <person name="Bloecker H."/>
            <person name="Scharfe M."/>
            <person name="Grimm M."/>
            <person name="Loehnert T.-H."/>
            <person name="Dose S."/>
            <person name="de Haan M."/>
            <person name="Maarse A.C."/>
            <person name="Schaefer M."/>
            <person name="Mueller-Auer S."/>
            <person name="Gabel C."/>
            <person name="Fuchs M."/>
            <person name="Fartmann B."/>
            <person name="Granderath K."/>
            <person name="Dauner D."/>
            <person name="Herzl A."/>
            <person name="Neumann S."/>
            <person name="Argiriou A."/>
            <person name="Vitale D."/>
            <person name="Liguori R."/>
            <person name="Piravandi E."/>
            <person name="Massenet O."/>
            <person name="Quigley F."/>
            <person name="Clabauld G."/>
            <person name="Muendlein A."/>
            <person name="Felber R."/>
            <person name="Schnabl S."/>
            <person name="Hiller R."/>
            <person name="Schmidt W."/>
            <person name="Lecharny A."/>
            <person name="Aubourg S."/>
            <person name="Chefdor F."/>
            <person name="Cooke R."/>
            <person name="Berger C."/>
            <person name="Monfort A."/>
            <person name="Casacuberta E."/>
            <person name="Gibbons T."/>
            <person name="Weber N."/>
            <person name="Vandenbol M."/>
            <person name="Bargues M."/>
            <person name="Terol J."/>
            <person name="Torres A."/>
            <person name="Perez-Perez A."/>
            <person name="Purnelle B."/>
            <person name="Bent E."/>
            <person name="Johnson S."/>
            <person name="Tacon D."/>
            <person name="Jesse T."/>
            <person name="Heijnen L."/>
            <person name="Schwarz S."/>
            <person name="Scholler P."/>
            <person name="Heber S."/>
            <person name="Francs P."/>
            <person name="Bielke C."/>
            <person name="Frishman D."/>
            <person name="Haase D."/>
            <person name="Lemcke K."/>
            <person name="Mewes H.-W."/>
            <person name="Stocker S."/>
            <person name="Zaccaria P."/>
            <person name="Bevan M."/>
            <person name="Wilson R.K."/>
            <person name="de la Bastide M."/>
            <person name="Habermann K."/>
            <person name="Parnell L."/>
            <person name="Dedhia N."/>
            <person name="Gnoj L."/>
            <person name="Schutz K."/>
            <person name="Huang E."/>
            <person name="Spiegel L."/>
            <person name="Sekhon M."/>
            <person name="Murray J."/>
            <person name="Sheet P."/>
            <person name="Cordes M."/>
            <person name="Abu-Threideh J."/>
            <person name="Stoneking T."/>
            <person name="Kalicki J."/>
            <person name="Graves T."/>
            <person name="Harmon G."/>
            <person name="Edwards J."/>
            <person name="Latreille P."/>
            <person name="Courtney L."/>
            <person name="Cloud J."/>
            <person name="Abbott A."/>
            <person name="Scott K."/>
            <person name="Johnson D."/>
            <person name="Minx P."/>
            <person name="Bentley D."/>
            <person name="Fulton B."/>
            <person name="Miller N."/>
            <person name="Greco T."/>
            <person name="Kemp K."/>
            <person name="Kramer J."/>
            <person name="Fulton L."/>
            <person name="Mardis E."/>
            <person name="Dante M."/>
            <person name="Pepin K."/>
            <person name="Hillier L.W."/>
            <person name="Nelson J."/>
            <person name="Spieth J."/>
            <person name="Ryan E."/>
            <person name="Andrews S."/>
            <person name="Geisel C."/>
            <person name="Layman D."/>
            <person name="Du H."/>
            <person name="Ali J."/>
            <person name="Berghoff A."/>
            <person name="Jones K."/>
            <person name="Drone K."/>
            <person name="Cotton M."/>
            <person name="Joshu C."/>
            <person name="Antonoiu B."/>
            <person name="Zidanic M."/>
            <person name="Strong C."/>
            <person name="Sun H."/>
            <person name="Lamar B."/>
            <person name="Yordan C."/>
            <person name="Ma P."/>
            <person name="Zhong J."/>
            <person name="Preston R."/>
            <person name="Vil D."/>
            <person name="Shekher M."/>
            <person name="Matero A."/>
            <person name="Shah R."/>
            <person name="Swaby I.K."/>
            <person name="O'Shaughnessy A."/>
            <person name="Rodriguez M."/>
            <person name="Hoffman J."/>
            <person name="Till S."/>
            <person name="Granat S."/>
            <person name="Shohdy N."/>
            <person name="Hasegawa A."/>
            <person name="Hameed A."/>
            <person name="Lodhi M."/>
            <person name="Johnson A."/>
            <person name="Chen E."/>
            <person name="Marra M.A."/>
            <person name="Martienssen R."/>
            <person name="McCombie W.R."/>
        </authorList>
    </citation>
    <scope>NUCLEOTIDE SEQUENCE [LARGE SCALE GENOMIC DNA]</scope>
    <source>
        <strain>cv. Columbia</strain>
    </source>
</reference>
<reference key="2">
    <citation type="journal article" date="2017" name="Plant J.">
        <title>Araport11: a complete reannotation of the Arabidopsis thaliana reference genome.</title>
        <authorList>
            <person name="Cheng C.Y."/>
            <person name="Krishnakumar V."/>
            <person name="Chan A.P."/>
            <person name="Thibaud-Nissen F."/>
            <person name="Schobel S."/>
            <person name="Town C.D."/>
        </authorList>
    </citation>
    <scope>GENOME REANNOTATION</scope>
    <source>
        <strain>cv. Columbia</strain>
    </source>
</reference>
<reference key="3">
    <citation type="journal article" date="2001" name="Plant Cell">
        <title>A genome-wide analysis of Arabidopsis Rop-interactive CRIB motif-containing proteins that act as Rop GTPase targets.</title>
        <authorList>
            <person name="Wu G."/>
            <person name="Gu Y."/>
            <person name="Li S."/>
            <person name="Yang Z."/>
        </authorList>
    </citation>
    <scope>FUNCTION</scope>
    <scope>SUBCELLULAR LOCATION</scope>
    <scope>TISSUE SPECIFICITY</scope>
    <scope>GENE FAMILY</scope>
    <scope>NOMENCLATURE</scope>
</reference>
<sequence length="156" mass="17019">MSMKMKGIYKGFKCISQIFAVEKERDEIEIGFPTDVKHVAHIGWEGSSGSAPGWMSEFKVGAELLSPRPSSFSNARPSTSFFTSSSSTDFDQGSSQRGISDTLRDIPPVTPINLPKNNKKKSSRRKKSSSSSSSPKSSRSSVLSKSSYKSTVSRLI</sequence>
<name>RIC10_ARATH</name>
<proteinExistence type="evidence at transcript level"/>
<protein>
    <recommendedName>
        <fullName>CRIB domain-containing protein RIC10</fullName>
    </recommendedName>
    <alternativeName>
        <fullName>ROP-interactive CRIB motif-containing protein 10</fullName>
    </alternativeName>
    <alternativeName>
        <fullName>Target of ROP protein RIC10</fullName>
    </alternativeName>
</protein>
<organism>
    <name type="scientific">Arabidopsis thaliana</name>
    <name type="common">Mouse-ear cress</name>
    <dbReference type="NCBI Taxonomy" id="3702"/>
    <lineage>
        <taxon>Eukaryota</taxon>
        <taxon>Viridiplantae</taxon>
        <taxon>Streptophyta</taxon>
        <taxon>Embryophyta</taxon>
        <taxon>Tracheophyta</taxon>
        <taxon>Spermatophyta</taxon>
        <taxon>Magnoliopsida</taxon>
        <taxon>eudicotyledons</taxon>
        <taxon>Gunneridae</taxon>
        <taxon>Pentapetalae</taxon>
        <taxon>rosids</taxon>
        <taxon>malvids</taxon>
        <taxon>Brassicales</taxon>
        <taxon>Brassicaceae</taxon>
        <taxon>Camelineae</taxon>
        <taxon>Arabidopsis</taxon>
    </lineage>
</organism>
<feature type="chain" id="PRO_0000422733" description="CRIB domain-containing protein RIC10">
    <location>
        <begin position="1"/>
        <end position="156"/>
    </location>
</feature>
<feature type="domain" description="CRIB" evidence="1">
    <location>
        <begin position="30"/>
        <end position="43"/>
    </location>
</feature>
<feature type="region of interest" description="Disordered" evidence="2">
    <location>
        <begin position="68"/>
        <end position="156"/>
    </location>
</feature>
<feature type="compositionally biased region" description="Polar residues" evidence="2">
    <location>
        <begin position="68"/>
        <end position="77"/>
    </location>
</feature>
<feature type="compositionally biased region" description="Low complexity" evidence="2">
    <location>
        <begin position="78"/>
        <end position="96"/>
    </location>
</feature>
<feature type="compositionally biased region" description="Basic residues" evidence="2">
    <location>
        <begin position="117"/>
        <end position="128"/>
    </location>
</feature>
<feature type="compositionally biased region" description="Low complexity" evidence="2">
    <location>
        <begin position="129"/>
        <end position="156"/>
    </location>
</feature>
<accession>Q9M0Y9</accession>
<gene>
    <name type="primary">RIC10</name>
    <name type="ordered locus">At4g04900</name>
    <name type="ORF">T1J1.7</name>
</gene>